<reference key="1">
    <citation type="submission" date="2006-09" db="EMBL/GenBank/DDBJ databases">
        <authorList>
            <consortium name="NIH - Xenopus Gene Collection (XGC) project"/>
        </authorList>
    </citation>
    <scope>NUCLEOTIDE SEQUENCE [LARGE SCALE MRNA]</scope>
    <source>
        <strain>N6</strain>
        <tissue>Oviduct</tissue>
    </source>
</reference>
<keyword id="KW-1003">Cell membrane</keyword>
<keyword id="KW-1015">Disulfide bond</keyword>
<keyword id="KW-0256">Endoplasmic reticulum</keyword>
<keyword id="KW-0325">Glycoprotein</keyword>
<keyword id="KW-0445">Lipid transport</keyword>
<keyword id="KW-0472">Membrane</keyword>
<keyword id="KW-1185">Reference proteome</keyword>
<keyword id="KW-0769">Symport</keyword>
<keyword id="KW-0812">Transmembrane</keyword>
<keyword id="KW-1133">Transmembrane helix</keyword>
<keyword id="KW-0813">Transport</keyword>
<protein>
    <recommendedName>
        <fullName>Sodium-dependent lysophosphatidylcholine symporter 1</fullName>
        <shortName>NLS1</shortName>
        <shortName>Sodium-dependent LPC symporter 1</shortName>
    </recommendedName>
    <alternativeName>
        <fullName>Major facilitator superfamily domain-containing protein 2A</fullName>
    </alternativeName>
</protein>
<dbReference type="EMBL" id="BC123088">
    <property type="protein sequence ID" value="AAI23089.1"/>
    <property type="molecule type" value="mRNA"/>
</dbReference>
<dbReference type="RefSeq" id="NP_001072635.1">
    <property type="nucleotide sequence ID" value="NM_001079167.1"/>
</dbReference>
<dbReference type="SMR" id="Q0IHM1"/>
<dbReference type="FunCoup" id="Q0IHM1">
    <property type="interactions" value="399"/>
</dbReference>
<dbReference type="STRING" id="8364.ENSXETP00000045212"/>
<dbReference type="GlyCosmos" id="Q0IHM1">
    <property type="glycosylation" value="2 sites, No reported glycans"/>
</dbReference>
<dbReference type="PaxDb" id="8364-ENSXETP00000002564"/>
<dbReference type="DNASU" id="780091"/>
<dbReference type="GeneID" id="780091"/>
<dbReference type="KEGG" id="xtr:780091"/>
<dbReference type="AGR" id="Xenbase:XB-GENE-951402"/>
<dbReference type="CTD" id="84879"/>
<dbReference type="Xenbase" id="XB-GENE-951402">
    <property type="gene designation" value="mfsd2a"/>
</dbReference>
<dbReference type="eggNOG" id="KOG4830">
    <property type="taxonomic scope" value="Eukaryota"/>
</dbReference>
<dbReference type="HOGENOM" id="CLU_027408_6_1_1"/>
<dbReference type="InParanoid" id="Q0IHM1"/>
<dbReference type="OMA" id="AFAIGFN"/>
<dbReference type="OrthoDB" id="197206at2759"/>
<dbReference type="PhylomeDB" id="Q0IHM1"/>
<dbReference type="TreeFam" id="TF331194"/>
<dbReference type="Reactome" id="R-XTR-1483191">
    <property type="pathway name" value="Synthesis of PC"/>
</dbReference>
<dbReference type="Proteomes" id="UP000008143">
    <property type="component" value="Chromosome 2"/>
</dbReference>
<dbReference type="Bgee" id="ENSXETG00000001185">
    <property type="expression patterns" value="Expressed in ovary and 13 other cell types or tissues"/>
</dbReference>
<dbReference type="ExpressionAtlas" id="Q0IHM1">
    <property type="expression patterns" value="baseline"/>
</dbReference>
<dbReference type="GO" id="GO:0005789">
    <property type="term" value="C:endoplasmic reticulum membrane"/>
    <property type="evidence" value="ECO:0007669"/>
    <property type="project" value="UniProtKB-SubCell"/>
</dbReference>
<dbReference type="GO" id="GO:0005886">
    <property type="term" value="C:plasma membrane"/>
    <property type="evidence" value="ECO:0000250"/>
    <property type="project" value="UniProtKB"/>
</dbReference>
<dbReference type="GO" id="GO:0051978">
    <property type="term" value="F:lysophospholipid:sodium symporter activity"/>
    <property type="evidence" value="ECO:0000250"/>
    <property type="project" value="UniProtKB"/>
</dbReference>
<dbReference type="GO" id="GO:0015293">
    <property type="term" value="F:symporter activity"/>
    <property type="evidence" value="ECO:0000250"/>
    <property type="project" value="UniProtKB"/>
</dbReference>
<dbReference type="GO" id="GO:0008643">
    <property type="term" value="P:carbohydrate transport"/>
    <property type="evidence" value="ECO:0007669"/>
    <property type="project" value="InterPro"/>
</dbReference>
<dbReference type="GO" id="GO:0060856">
    <property type="term" value="P:establishment of blood-brain barrier"/>
    <property type="evidence" value="ECO:0000250"/>
    <property type="project" value="UniProtKB"/>
</dbReference>
<dbReference type="GO" id="GO:0015908">
    <property type="term" value="P:fatty acid transport"/>
    <property type="evidence" value="ECO:0000250"/>
    <property type="project" value="UniProtKB"/>
</dbReference>
<dbReference type="GO" id="GO:1990379">
    <property type="term" value="P:lipid transport across blood-brain barrier"/>
    <property type="evidence" value="ECO:0000250"/>
    <property type="project" value="UniProtKB"/>
</dbReference>
<dbReference type="GO" id="GO:0051977">
    <property type="term" value="P:lysophospholipid transport"/>
    <property type="evidence" value="ECO:0000250"/>
    <property type="project" value="UniProtKB"/>
</dbReference>
<dbReference type="GO" id="GO:0045056">
    <property type="term" value="P:transcytosis"/>
    <property type="evidence" value="ECO:0000250"/>
    <property type="project" value="UniProtKB"/>
</dbReference>
<dbReference type="CDD" id="cd17451">
    <property type="entry name" value="MFS_NLS1_MFSD2A"/>
    <property type="match status" value="1"/>
</dbReference>
<dbReference type="FunFam" id="1.20.1250.20:FF:000185">
    <property type="entry name" value="sodium-dependent lysophosphatidylcholine symporter 1 isoform X1"/>
    <property type="match status" value="1"/>
</dbReference>
<dbReference type="FunFam" id="1.20.1250.20:FF:000183">
    <property type="entry name" value="sodium-dependent lysophosphatidylcholine symporter 1 isoform X2"/>
    <property type="match status" value="1"/>
</dbReference>
<dbReference type="Gene3D" id="1.20.1250.20">
    <property type="entry name" value="MFS general substrate transporter like domains"/>
    <property type="match status" value="2"/>
</dbReference>
<dbReference type="InterPro" id="IPR039672">
    <property type="entry name" value="MFS_2"/>
</dbReference>
<dbReference type="InterPro" id="IPR036259">
    <property type="entry name" value="MFS_trans_sf"/>
</dbReference>
<dbReference type="PANTHER" id="PTHR11328">
    <property type="entry name" value="MAJOR FACILITATOR SUPERFAMILY DOMAIN-CONTAINING PROTEIN"/>
    <property type="match status" value="1"/>
</dbReference>
<dbReference type="PANTHER" id="PTHR11328:SF29">
    <property type="entry name" value="SODIUM-DEPENDENT LYSOPHOSPHATIDYLCHOLINE SYMPORTER 1"/>
    <property type="match status" value="1"/>
</dbReference>
<dbReference type="Pfam" id="PF13347">
    <property type="entry name" value="MFS_2"/>
    <property type="match status" value="1"/>
</dbReference>
<dbReference type="SUPFAM" id="SSF103473">
    <property type="entry name" value="MFS general substrate transporter"/>
    <property type="match status" value="1"/>
</dbReference>
<proteinExistence type="evidence at transcript level"/>
<gene>
    <name type="primary">mfsd2a</name>
    <name type="synonym">mfsd2</name>
    <name type="synonym">nls1</name>
</gene>
<comment type="function">
    <text evidence="1">Sodium-dependent lysophosphatidylcholine (LPC) symporter, which plays an essential role for blood-brain barrier formation and function. Specifically expressed in endothelium of the blood-brain barrier of micro-vessels and transports LPC into the brain. Transport of LPC is essential because it constitutes the major mechanism by which docosahexaenoic acid (DHA), an omega-3 fatty acid that is essential for normal brain growth and cognitive function, enters the brain. Transports LPC carrying long-chain fatty acids such LPC oleate and LPC palmitate with a minimum acyl chain length of 14 carbons. Does not transport docosahexaenoic acid in unesterified fatty acid.</text>
</comment>
<comment type="catalytic activity">
    <reaction evidence="1">
        <text>a 1-acyl-sn-glycero-3-phosphocholine(in) + Na(+)(in) = a 1-acyl-sn-glycero-3-phosphocholine(out) + Na(+)(out)</text>
        <dbReference type="Rhea" id="RHEA:44376"/>
        <dbReference type="ChEBI" id="CHEBI:29101"/>
        <dbReference type="ChEBI" id="CHEBI:58168"/>
    </reaction>
</comment>
<comment type="catalytic activity">
    <reaction evidence="1">
        <text>1-(4Z,7Z,10Z,13Z,16Z,19Z-docosahexaenoyl)-sn-glycero-3-phosphocholine(in) + Na(+)(in) = 1-(4Z,7Z,10Z,13Z,16Z,19Z-docosahexaenoyl)-sn-glycero-3-phosphocholine(out) + Na(+)(out)</text>
        <dbReference type="Rhea" id="RHEA:43860"/>
        <dbReference type="ChEBI" id="CHEBI:29101"/>
        <dbReference type="ChEBI" id="CHEBI:73873"/>
    </reaction>
</comment>
<comment type="catalytic activity">
    <reaction evidence="1">
        <text>1-(9Z-octadecenoyl)-sn-glycero-3-phosphocholine(in) + Na(+)(in) = 1-(9Z-octadecenoyl)-sn-glycero-3-phosphocholine(out) + Na(+)(out)</text>
        <dbReference type="Rhea" id="RHEA:43856"/>
        <dbReference type="ChEBI" id="CHEBI:28610"/>
        <dbReference type="ChEBI" id="CHEBI:29101"/>
    </reaction>
</comment>
<comment type="catalytic activity">
    <reaction evidence="1">
        <text>1-hexadecanoyl-sn-glycero-3-phosphocholine(in) + Na(+)(in) = 1-hexadecanoyl-sn-glycero-3-phosphocholine(out) + Na(+)(out)</text>
        <dbReference type="Rhea" id="RHEA:43864"/>
        <dbReference type="ChEBI" id="CHEBI:29101"/>
        <dbReference type="ChEBI" id="CHEBI:72998"/>
    </reaction>
</comment>
<comment type="catalytic activity">
    <reaction evidence="1">
        <text>a 1-acyl-sn-glycero-3-phosphoethanolamine(in) + Na(+)(in) = a 1-acyl-sn-glycero-3-phosphoethanolamine(out) + Na(+)(out)</text>
        <dbReference type="Rhea" id="RHEA:43868"/>
        <dbReference type="ChEBI" id="CHEBI:29101"/>
        <dbReference type="ChEBI" id="CHEBI:64381"/>
    </reaction>
</comment>
<comment type="subcellular location">
    <subcellularLocation>
        <location evidence="1">Cell membrane</location>
        <topology evidence="2">Multi-pass membrane protein</topology>
    </subcellularLocation>
    <subcellularLocation>
        <location evidence="1">Endoplasmic reticulum membrane</location>
        <topology evidence="2">Multi-pass membrane protein</topology>
    </subcellularLocation>
</comment>
<comment type="similarity">
    <text evidence="4">Belongs to the major facilitator superfamily.</text>
</comment>
<feature type="chain" id="PRO_0000273391" description="Sodium-dependent lysophosphatidylcholine symporter 1">
    <location>
        <begin position="1"/>
        <end position="525"/>
    </location>
</feature>
<feature type="topological domain" description="Cytoplasmic" evidence="1">
    <location>
        <begin position="1"/>
        <end position="32"/>
    </location>
</feature>
<feature type="transmembrane region" description="Helical" evidence="1">
    <location>
        <begin position="33"/>
        <end position="62"/>
    </location>
</feature>
<feature type="topological domain" description="Extracellular" evidence="1">
    <location>
        <begin position="63"/>
        <end position="73"/>
    </location>
</feature>
<feature type="transmembrane region" description="Helical" evidence="1">
    <location>
        <begin position="74"/>
        <end position="94"/>
    </location>
</feature>
<feature type="topological domain" description="Cytoplasmic" evidence="1">
    <location>
        <begin position="95"/>
        <end position="106"/>
    </location>
</feature>
<feature type="transmembrane region" description="Helical" evidence="1">
    <location>
        <begin position="107"/>
        <end position="126"/>
    </location>
</feature>
<feature type="topological domain" description="Extracellular" evidence="1">
    <location>
        <begin position="127"/>
        <end position="137"/>
    </location>
</feature>
<feature type="transmembrane region" description="Helical" evidence="1">
    <location>
        <begin position="138"/>
        <end position="162"/>
    </location>
</feature>
<feature type="topological domain" description="Cytoplasmic" evidence="1">
    <location>
        <begin position="163"/>
        <end position="169"/>
    </location>
</feature>
<feature type="transmembrane region" description="Helical" evidence="1">
    <location>
        <begin position="170"/>
        <end position="201"/>
    </location>
</feature>
<feature type="topological domain" description="Extracellular" evidence="1">
    <location>
        <begin position="202"/>
        <end position="226"/>
    </location>
</feature>
<feature type="transmembrane region" description="Helical" evidence="1">
    <location>
        <begin position="227"/>
        <end position="260"/>
    </location>
</feature>
<feature type="topological domain" description="Cytoplasmic" evidence="1">
    <location>
        <begin position="261"/>
        <end position="291"/>
    </location>
</feature>
<feature type="transmembrane region" description="Helical" evidence="1">
    <location>
        <begin position="292"/>
        <end position="318"/>
    </location>
</feature>
<feature type="topological domain" description="Extracellular" evidence="1">
    <location>
        <begin position="319"/>
        <end position="329"/>
    </location>
</feature>
<feature type="transmembrane region" description="Helical" evidence="1">
    <location>
        <begin position="330"/>
        <end position="348"/>
    </location>
</feature>
<feature type="topological domain" description="Cytoplasmic" evidence="1">
    <location>
        <begin position="349"/>
        <end position="352"/>
    </location>
</feature>
<feature type="transmembrane region" description="Helical" evidence="1">
    <location>
        <begin position="353"/>
        <end position="374"/>
    </location>
</feature>
<feature type="topological domain" description="Extracellular" evidence="1">
    <location>
        <begin position="375"/>
        <end position="377"/>
    </location>
</feature>
<feature type="transmembrane region" description="Helical" evidence="1">
    <location>
        <begin position="378"/>
        <end position="414"/>
    </location>
</feature>
<feature type="topological domain" description="Cytoplasmic" evidence="1">
    <location>
        <begin position="415"/>
        <end position="424"/>
    </location>
</feature>
<feature type="transmembrane region" description="Helical" evidence="1">
    <location>
        <begin position="425"/>
        <end position="451"/>
    </location>
</feature>
<feature type="topological domain" description="Extracellular" evidence="1">
    <location>
        <begin position="452"/>
        <end position="463"/>
    </location>
</feature>
<feature type="transmembrane region" description="Helical" evidence="1">
    <location>
        <begin position="464"/>
        <end position="487"/>
    </location>
</feature>
<feature type="topological domain" description="Cytoplasmic" evidence="1">
    <location>
        <begin position="488"/>
        <end position="525"/>
    </location>
</feature>
<feature type="region of interest" description="Disordered" evidence="3">
    <location>
        <begin position="1"/>
        <end position="29"/>
    </location>
</feature>
<feature type="glycosylation site" description="N-linked (GlcNAc...) asparagine" evidence="2">
    <location>
        <position position="216"/>
    </location>
</feature>
<feature type="glycosylation site" description="N-linked (GlcNAc...) asparagine" evidence="2">
    <location>
        <position position="225"/>
    </location>
</feature>
<feature type="disulfide bond" evidence="1">
    <location>
        <begin position="205"/>
        <end position="458"/>
    </location>
</feature>
<evidence type="ECO:0000250" key="1">
    <source>
        <dbReference type="UniProtKB" id="Q9DA75"/>
    </source>
</evidence>
<evidence type="ECO:0000255" key="2"/>
<evidence type="ECO:0000256" key="3">
    <source>
        <dbReference type="SAM" id="MobiDB-lite"/>
    </source>
</evidence>
<evidence type="ECO:0000305" key="4"/>
<organism>
    <name type="scientific">Xenopus tropicalis</name>
    <name type="common">Western clawed frog</name>
    <name type="synonym">Silurana tropicalis</name>
    <dbReference type="NCBI Taxonomy" id="8364"/>
    <lineage>
        <taxon>Eukaryota</taxon>
        <taxon>Metazoa</taxon>
        <taxon>Chordata</taxon>
        <taxon>Craniata</taxon>
        <taxon>Vertebrata</taxon>
        <taxon>Euteleostomi</taxon>
        <taxon>Amphibia</taxon>
        <taxon>Batrachia</taxon>
        <taxon>Anura</taxon>
        <taxon>Pipoidea</taxon>
        <taxon>Pipidae</taxon>
        <taxon>Xenopodinae</taxon>
        <taxon>Xenopus</taxon>
        <taxon>Silurana</taxon>
    </lineage>
</organism>
<accession>Q0IHM1</accession>
<name>NLS1_XENTR</name>
<sequence>MEKESENASCAGLLGQKNEPGSPTQSRSGKHKLSVCSKICFAIGGAPYQITGCALGFFLQIFLLDIAQVPPFYASIILFSGRVWDAITDPLVGFFVSKSSWTRLGRLLPWVVFSTPFAVVSYLLIWFVPGFSGVSMVIWYLVFYCLFQTLVTCFHVPYSALTMFISKEQSDRDSATGYRMTVEVLGTVLGTAIQGQIVGRENTPCVEHIRETHLYNTSVIMEDLNITHDVESLSSTRDAYMIAAGVICAIYVLCAIILTLGVREKRDAYELLSDQPFSFWQGLKLVMSHKPYIKLITGFLFTSLAFMLLEGNFALFLTYTMGFRRDFQNILLVVMLSATLTVPFWQWFLTRFGKKTAVYFGISSVIPFLILVVLMESNLILAYVVAVAAGLSVAAAFLLPWSMLPDVIDDFILKNPDSHGHEPIFFSFYVFFTKFASGVSLGISTLSLDFAGYQTRACSQPEQVNLTLKMLICVAPVILILLGLLLFILYPINEEKRKQNKKALQLIRESNRDSDSDSLELASNV</sequence>